<protein>
    <recommendedName>
        <fullName>Protein png-1</fullName>
    </recommendedName>
</protein>
<sequence length="412" mass="47132">MAGNNSGGGSYPLDDHVKSVARDLQHRFAQMSNRDQKFDLHVIPDLLSQPVVPEPPAQDDKEAQNFEKYLIAMSHIPLNYENPGLLDEALQQIPLDRLSQEAEEEVELFQAKAASLGRSKPEWSHQECMVRALLRWFRRSFFTFVNNPPCSECLSPTNKIRNVAPTPEERAHSATWVELYACVTCGAYERFPRYTEAWQLLRVKRGRAGDFANVFTMLCRALDIRARWVWCQEDYLWTEIYSEHQQRWVHVDSCEEAWDMPHMYYKNWGKKMSYVIAFSREGAVDVTRRYVGSPDALLPRTRCPEGVLKFIMEEITNLHRPKYAPDGETRLRLYREDVAEDVQLRSLWSATLEQSRRLKAAAAAAARGGRSSPDNKSGANMMGSPATGDIKRPIPEDAPVPDVPSLWPTYGP</sequence>
<accession>Q7SI01</accession>
<accession>V5IQI5</accession>
<reference key="1">
    <citation type="journal article" date="2003" name="Nature">
        <title>The genome sequence of the filamentous fungus Neurospora crassa.</title>
        <authorList>
            <person name="Galagan J.E."/>
            <person name="Calvo S.E."/>
            <person name="Borkovich K.A."/>
            <person name="Selker E.U."/>
            <person name="Read N.D."/>
            <person name="Jaffe D.B."/>
            <person name="FitzHugh W."/>
            <person name="Ma L.-J."/>
            <person name="Smirnov S."/>
            <person name="Purcell S."/>
            <person name="Rehman B."/>
            <person name="Elkins T."/>
            <person name="Engels R."/>
            <person name="Wang S."/>
            <person name="Nielsen C.B."/>
            <person name="Butler J."/>
            <person name="Endrizzi M."/>
            <person name="Qui D."/>
            <person name="Ianakiev P."/>
            <person name="Bell-Pedersen D."/>
            <person name="Nelson M.A."/>
            <person name="Werner-Washburne M."/>
            <person name="Selitrennikoff C.P."/>
            <person name="Kinsey J.A."/>
            <person name="Braun E.L."/>
            <person name="Zelter A."/>
            <person name="Schulte U."/>
            <person name="Kothe G.O."/>
            <person name="Jedd G."/>
            <person name="Mewes H.-W."/>
            <person name="Staben C."/>
            <person name="Marcotte E."/>
            <person name="Greenberg D."/>
            <person name="Roy A."/>
            <person name="Foley K."/>
            <person name="Naylor J."/>
            <person name="Stange-Thomann N."/>
            <person name="Barrett R."/>
            <person name="Gnerre S."/>
            <person name="Kamal M."/>
            <person name="Kamvysselis M."/>
            <person name="Mauceli E.W."/>
            <person name="Bielke C."/>
            <person name="Rudd S."/>
            <person name="Frishman D."/>
            <person name="Krystofova S."/>
            <person name="Rasmussen C."/>
            <person name="Metzenberg R.L."/>
            <person name="Perkins D.D."/>
            <person name="Kroken S."/>
            <person name="Cogoni C."/>
            <person name="Macino G."/>
            <person name="Catcheside D.E.A."/>
            <person name="Li W."/>
            <person name="Pratt R.J."/>
            <person name="Osmani S.A."/>
            <person name="DeSouza C.P.C."/>
            <person name="Glass N.L."/>
            <person name="Orbach M.J."/>
            <person name="Berglund J.A."/>
            <person name="Voelker R."/>
            <person name="Yarden O."/>
            <person name="Plamann M."/>
            <person name="Seiler S."/>
            <person name="Dunlap J.C."/>
            <person name="Radford A."/>
            <person name="Aramayo R."/>
            <person name="Natvig D.O."/>
            <person name="Alex L.A."/>
            <person name="Mannhaupt G."/>
            <person name="Ebbole D.J."/>
            <person name="Freitag M."/>
            <person name="Paulsen I."/>
            <person name="Sachs M.S."/>
            <person name="Lander E.S."/>
            <person name="Nusbaum C."/>
            <person name="Birren B.W."/>
        </authorList>
    </citation>
    <scope>NUCLEOTIDE SEQUENCE [LARGE SCALE GENOMIC DNA]</scope>
    <source>
        <strain>ATCC 24698 / 74-OR23-1A / CBS 708.71 / DSM 1257 / FGSC 987</strain>
    </source>
</reference>
<evidence type="ECO:0000250" key="1"/>
<evidence type="ECO:0000256" key="2">
    <source>
        <dbReference type="SAM" id="MobiDB-lite"/>
    </source>
</evidence>
<evidence type="ECO:0000305" key="3"/>
<feature type="chain" id="PRO_0000248993" description="Protein png-1">
    <location>
        <begin position="1"/>
        <end position="412"/>
    </location>
</feature>
<feature type="region of interest" description="Disordered" evidence="2">
    <location>
        <begin position="363"/>
        <end position="412"/>
    </location>
</feature>
<feature type="binding site" evidence="1">
    <location>
        <position position="150"/>
    </location>
    <ligand>
        <name>Zn(2+)</name>
        <dbReference type="ChEBI" id="CHEBI:29105"/>
    </ligand>
</feature>
<feature type="binding site" evidence="1">
    <location>
        <position position="153"/>
    </location>
    <ligand>
        <name>Zn(2+)</name>
        <dbReference type="ChEBI" id="CHEBI:29105"/>
    </ligand>
</feature>
<feature type="binding site" evidence="1">
    <location>
        <position position="182"/>
    </location>
    <ligand>
        <name>Zn(2+)</name>
        <dbReference type="ChEBI" id="CHEBI:29105"/>
    </ligand>
</feature>
<feature type="binding site" evidence="1">
    <location>
        <position position="185"/>
    </location>
    <ligand>
        <name>Zn(2+)</name>
        <dbReference type="ChEBI" id="CHEBI:29105"/>
    </ligand>
</feature>
<keyword id="KW-0479">Metal-binding</keyword>
<keyword id="KW-1185">Reference proteome</keyword>
<keyword id="KW-0862">Zinc</keyword>
<organism>
    <name type="scientific">Neurospora crassa (strain ATCC 24698 / 74-OR23-1A / CBS 708.71 / DSM 1257 / FGSC 987)</name>
    <dbReference type="NCBI Taxonomy" id="367110"/>
    <lineage>
        <taxon>Eukaryota</taxon>
        <taxon>Fungi</taxon>
        <taxon>Dikarya</taxon>
        <taxon>Ascomycota</taxon>
        <taxon>Pezizomycotina</taxon>
        <taxon>Sordariomycetes</taxon>
        <taxon>Sordariomycetidae</taxon>
        <taxon>Sordariales</taxon>
        <taxon>Sordariaceae</taxon>
        <taxon>Neurospora</taxon>
    </lineage>
</organism>
<dbReference type="EMBL" id="CM002236">
    <property type="protein sequence ID" value="ESA44291.1"/>
    <property type="molecule type" value="Genomic_DNA"/>
</dbReference>
<dbReference type="EMBL" id="CM002236">
    <property type="protein sequence ID" value="ESA44292.1"/>
    <property type="molecule type" value="Genomic_DNA"/>
</dbReference>
<dbReference type="EMBL" id="CM002236">
    <property type="protein sequence ID" value="ESA44293.1"/>
    <property type="molecule type" value="Genomic_DNA"/>
</dbReference>
<dbReference type="EMBL" id="CM002236">
    <property type="protein sequence ID" value="ESA44294.1"/>
    <property type="molecule type" value="Genomic_DNA"/>
</dbReference>
<dbReference type="RefSeq" id="XP_011392802.1">
    <property type="nucleotide sequence ID" value="XM_011394500.1"/>
</dbReference>
<dbReference type="RefSeq" id="XP_011392803.1">
    <property type="nucleotide sequence ID" value="XM_011394501.1"/>
</dbReference>
<dbReference type="RefSeq" id="XP_011392804.1">
    <property type="nucleotide sequence ID" value="XM_011394502.1"/>
</dbReference>
<dbReference type="RefSeq" id="XP_011392805.1">
    <property type="nucleotide sequence ID" value="XM_011394503.1"/>
</dbReference>
<dbReference type="SMR" id="Q7SI01"/>
<dbReference type="FunCoup" id="Q7SI01">
    <property type="interactions" value="76"/>
</dbReference>
<dbReference type="STRING" id="367110.Q7SI01"/>
<dbReference type="PaxDb" id="5141-EFNCRP00000000978"/>
<dbReference type="EnsemblFungi" id="ESA44291">
    <property type="protein sequence ID" value="ESA44291"/>
    <property type="gene ID" value="NCU00651"/>
</dbReference>
<dbReference type="EnsemblFungi" id="ESA44292">
    <property type="protein sequence ID" value="ESA44292"/>
    <property type="gene ID" value="NCU00651"/>
</dbReference>
<dbReference type="EnsemblFungi" id="ESA44293">
    <property type="protein sequence ID" value="ESA44293"/>
    <property type="gene ID" value="NCU00651"/>
</dbReference>
<dbReference type="EnsemblFungi" id="ESA44294">
    <property type="protein sequence ID" value="ESA44294"/>
    <property type="gene ID" value="NCU00651"/>
</dbReference>
<dbReference type="GeneID" id="3881916"/>
<dbReference type="KEGG" id="ncr:NCU00651"/>
<dbReference type="VEuPathDB" id="FungiDB:NCU00651"/>
<dbReference type="HOGENOM" id="CLU_031058_1_0_1"/>
<dbReference type="InParanoid" id="Q7SI01"/>
<dbReference type="OrthoDB" id="409136at2759"/>
<dbReference type="Proteomes" id="UP000001805">
    <property type="component" value="Chromosome 1, Linkage Group I"/>
</dbReference>
<dbReference type="GO" id="GO:0005829">
    <property type="term" value="C:cytosol"/>
    <property type="evidence" value="ECO:0000318"/>
    <property type="project" value="GO_Central"/>
</dbReference>
<dbReference type="GO" id="GO:0005634">
    <property type="term" value="C:nucleus"/>
    <property type="evidence" value="ECO:0000318"/>
    <property type="project" value="GO_Central"/>
</dbReference>
<dbReference type="GO" id="GO:0046872">
    <property type="term" value="F:metal ion binding"/>
    <property type="evidence" value="ECO:0007669"/>
    <property type="project" value="UniProtKB-KW"/>
</dbReference>
<dbReference type="GO" id="GO:0000224">
    <property type="term" value="F:peptide-N4-(N-acetyl-beta-glucosaminyl)asparagine amidase activity"/>
    <property type="evidence" value="ECO:0000318"/>
    <property type="project" value="GO_Central"/>
</dbReference>
<dbReference type="GO" id="GO:0006516">
    <property type="term" value="P:glycoprotein catabolic process"/>
    <property type="evidence" value="ECO:0000318"/>
    <property type="project" value="GO_Central"/>
</dbReference>
<dbReference type="FunFam" id="2.20.25.10:FF:000011">
    <property type="entry name" value="peptide-N(4)-(N-acetyl-beta- glucosaminyl)asparagine amidase"/>
    <property type="match status" value="1"/>
</dbReference>
<dbReference type="Gene3D" id="2.20.25.10">
    <property type="match status" value="1"/>
</dbReference>
<dbReference type="Gene3D" id="3.10.620.30">
    <property type="match status" value="1"/>
</dbReference>
<dbReference type="InterPro" id="IPR038765">
    <property type="entry name" value="Papain-like_cys_pep_sf"/>
</dbReference>
<dbReference type="InterPro" id="IPR050883">
    <property type="entry name" value="PNGase"/>
</dbReference>
<dbReference type="InterPro" id="IPR002931">
    <property type="entry name" value="Transglutaminase-like"/>
</dbReference>
<dbReference type="PANTHER" id="PTHR12143">
    <property type="entry name" value="PEPTIDE N-GLYCANASE PNGASE -RELATED"/>
    <property type="match status" value="1"/>
</dbReference>
<dbReference type="PANTHER" id="PTHR12143:SF19">
    <property type="entry name" value="PEPTIDE-N(4)-(N-ACETYL-BETA-GLUCOSAMINYL)ASPARAGINE AMIDASE"/>
    <property type="match status" value="1"/>
</dbReference>
<dbReference type="Pfam" id="PF01841">
    <property type="entry name" value="Transglut_core"/>
    <property type="match status" value="1"/>
</dbReference>
<dbReference type="SMART" id="SM00460">
    <property type="entry name" value="TGc"/>
    <property type="match status" value="1"/>
</dbReference>
<dbReference type="SUPFAM" id="SSF54001">
    <property type="entry name" value="Cysteine proteinases"/>
    <property type="match status" value="1"/>
</dbReference>
<gene>
    <name type="primary">un-7</name>
    <name type="synonym">png-1</name>
    <name type="ORF">NCU00651</name>
</gene>
<proteinExistence type="inferred from homology"/>
<name>PNG1_NEUCR</name>
<comment type="similarity">
    <text evidence="3">Belongs to the transglutaminase-like superfamily. PNGase family.</text>
</comment>
<comment type="caution">
    <text evidence="3">Although strongly related to the peptide:N-glycanase enzyme, it lacks the conserved active site Cys in position 208, which is replaced by a Ala residue suggesting that it has no activity.</text>
</comment>